<protein>
    <recommendedName>
        <fullName evidence="2">Elongation factor Tu</fullName>
        <shortName evidence="2">EF-Tu</shortName>
        <ecNumber evidence="2">3.6.5.3</ecNumber>
    </recommendedName>
</protein>
<accession>Q3APH1</accession>
<dbReference type="EC" id="3.6.5.3" evidence="2"/>
<dbReference type="EMBL" id="CP000108">
    <property type="protein sequence ID" value="ABB29104.1"/>
    <property type="molecule type" value="Genomic_DNA"/>
</dbReference>
<dbReference type="SMR" id="Q3APH1"/>
<dbReference type="STRING" id="340177.Cag_1853"/>
<dbReference type="KEGG" id="cch:Cag_1853"/>
<dbReference type="eggNOG" id="COG0050">
    <property type="taxonomic scope" value="Bacteria"/>
</dbReference>
<dbReference type="HOGENOM" id="CLU_007265_0_1_10"/>
<dbReference type="OrthoDB" id="9804504at2"/>
<dbReference type="GO" id="GO:0005829">
    <property type="term" value="C:cytosol"/>
    <property type="evidence" value="ECO:0007669"/>
    <property type="project" value="TreeGrafter"/>
</dbReference>
<dbReference type="GO" id="GO:0005525">
    <property type="term" value="F:GTP binding"/>
    <property type="evidence" value="ECO:0007669"/>
    <property type="project" value="UniProtKB-UniRule"/>
</dbReference>
<dbReference type="GO" id="GO:0003924">
    <property type="term" value="F:GTPase activity"/>
    <property type="evidence" value="ECO:0007669"/>
    <property type="project" value="InterPro"/>
</dbReference>
<dbReference type="GO" id="GO:0003746">
    <property type="term" value="F:translation elongation factor activity"/>
    <property type="evidence" value="ECO:0007669"/>
    <property type="project" value="UniProtKB-UniRule"/>
</dbReference>
<dbReference type="CDD" id="cd01884">
    <property type="entry name" value="EF_Tu"/>
    <property type="match status" value="1"/>
</dbReference>
<dbReference type="CDD" id="cd03697">
    <property type="entry name" value="EFTU_II"/>
    <property type="match status" value="1"/>
</dbReference>
<dbReference type="CDD" id="cd03707">
    <property type="entry name" value="EFTU_III"/>
    <property type="match status" value="1"/>
</dbReference>
<dbReference type="FunFam" id="2.40.30.10:FF:000001">
    <property type="entry name" value="Elongation factor Tu"/>
    <property type="match status" value="1"/>
</dbReference>
<dbReference type="FunFam" id="3.40.50.300:FF:000003">
    <property type="entry name" value="Elongation factor Tu"/>
    <property type="match status" value="1"/>
</dbReference>
<dbReference type="Gene3D" id="3.40.50.300">
    <property type="entry name" value="P-loop containing nucleotide triphosphate hydrolases"/>
    <property type="match status" value="1"/>
</dbReference>
<dbReference type="Gene3D" id="2.40.30.10">
    <property type="entry name" value="Translation factors"/>
    <property type="match status" value="2"/>
</dbReference>
<dbReference type="HAMAP" id="MF_00118_B">
    <property type="entry name" value="EF_Tu_B"/>
    <property type="match status" value="1"/>
</dbReference>
<dbReference type="InterPro" id="IPR041709">
    <property type="entry name" value="EF-Tu_GTP-bd"/>
</dbReference>
<dbReference type="InterPro" id="IPR050055">
    <property type="entry name" value="EF-Tu_GTPase"/>
</dbReference>
<dbReference type="InterPro" id="IPR004161">
    <property type="entry name" value="EFTu-like_2"/>
</dbReference>
<dbReference type="InterPro" id="IPR033720">
    <property type="entry name" value="EFTU_2"/>
</dbReference>
<dbReference type="InterPro" id="IPR031157">
    <property type="entry name" value="G_TR_CS"/>
</dbReference>
<dbReference type="InterPro" id="IPR027417">
    <property type="entry name" value="P-loop_NTPase"/>
</dbReference>
<dbReference type="InterPro" id="IPR005225">
    <property type="entry name" value="Small_GTP-bd"/>
</dbReference>
<dbReference type="InterPro" id="IPR000795">
    <property type="entry name" value="T_Tr_GTP-bd_dom"/>
</dbReference>
<dbReference type="InterPro" id="IPR009000">
    <property type="entry name" value="Transl_B-barrel_sf"/>
</dbReference>
<dbReference type="InterPro" id="IPR009001">
    <property type="entry name" value="Transl_elong_EF1A/Init_IF2_C"/>
</dbReference>
<dbReference type="InterPro" id="IPR004541">
    <property type="entry name" value="Transl_elong_EFTu/EF1A_bac/org"/>
</dbReference>
<dbReference type="InterPro" id="IPR004160">
    <property type="entry name" value="Transl_elong_EFTu/EF1A_C"/>
</dbReference>
<dbReference type="NCBIfam" id="TIGR00485">
    <property type="entry name" value="EF-Tu"/>
    <property type="match status" value="1"/>
</dbReference>
<dbReference type="NCBIfam" id="NF000766">
    <property type="entry name" value="PRK00049.1"/>
    <property type="match status" value="1"/>
</dbReference>
<dbReference type="NCBIfam" id="NF009372">
    <property type="entry name" value="PRK12735.1"/>
    <property type="match status" value="1"/>
</dbReference>
<dbReference type="NCBIfam" id="NF009373">
    <property type="entry name" value="PRK12736.1"/>
    <property type="match status" value="1"/>
</dbReference>
<dbReference type="NCBIfam" id="TIGR00231">
    <property type="entry name" value="small_GTP"/>
    <property type="match status" value="1"/>
</dbReference>
<dbReference type="PANTHER" id="PTHR43721:SF22">
    <property type="entry name" value="ELONGATION FACTOR TU, MITOCHONDRIAL"/>
    <property type="match status" value="1"/>
</dbReference>
<dbReference type="PANTHER" id="PTHR43721">
    <property type="entry name" value="ELONGATION FACTOR TU-RELATED"/>
    <property type="match status" value="1"/>
</dbReference>
<dbReference type="Pfam" id="PF00009">
    <property type="entry name" value="GTP_EFTU"/>
    <property type="match status" value="1"/>
</dbReference>
<dbReference type="Pfam" id="PF03144">
    <property type="entry name" value="GTP_EFTU_D2"/>
    <property type="match status" value="1"/>
</dbReference>
<dbReference type="Pfam" id="PF03143">
    <property type="entry name" value="GTP_EFTU_D3"/>
    <property type="match status" value="1"/>
</dbReference>
<dbReference type="PRINTS" id="PR00315">
    <property type="entry name" value="ELONGATNFCT"/>
</dbReference>
<dbReference type="SUPFAM" id="SSF50465">
    <property type="entry name" value="EF-Tu/eEF-1alpha/eIF2-gamma C-terminal domain"/>
    <property type="match status" value="1"/>
</dbReference>
<dbReference type="SUPFAM" id="SSF52540">
    <property type="entry name" value="P-loop containing nucleoside triphosphate hydrolases"/>
    <property type="match status" value="1"/>
</dbReference>
<dbReference type="SUPFAM" id="SSF50447">
    <property type="entry name" value="Translation proteins"/>
    <property type="match status" value="1"/>
</dbReference>
<dbReference type="PROSITE" id="PS00301">
    <property type="entry name" value="G_TR_1"/>
    <property type="match status" value="1"/>
</dbReference>
<dbReference type="PROSITE" id="PS51722">
    <property type="entry name" value="G_TR_2"/>
    <property type="match status" value="1"/>
</dbReference>
<gene>
    <name evidence="2" type="primary">tuf</name>
    <name type="ordered locus">Cag_1853</name>
</gene>
<proteinExistence type="inferred from homology"/>
<comment type="function">
    <text evidence="2">GTP hydrolase that promotes the GTP-dependent binding of aminoacyl-tRNA to the A-site of ribosomes during protein biosynthesis.</text>
</comment>
<comment type="catalytic activity">
    <reaction evidence="2">
        <text>GTP + H2O = GDP + phosphate + H(+)</text>
        <dbReference type="Rhea" id="RHEA:19669"/>
        <dbReference type="ChEBI" id="CHEBI:15377"/>
        <dbReference type="ChEBI" id="CHEBI:15378"/>
        <dbReference type="ChEBI" id="CHEBI:37565"/>
        <dbReference type="ChEBI" id="CHEBI:43474"/>
        <dbReference type="ChEBI" id="CHEBI:58189"/>
        <dbReference type="EC" id="3.6.5.3"/>
    </reaction>
    <physiologicalReaction direction="left-to-right" evidence="2">
        <dbReference type="Rhea" id="RHEA:19670"/>
    </physiologicalReaction>
</comment>
<comment type="subunit">
    <text evidence="2">Monomer.</text>
</comment>
<comment type="subcellular location">
    <subcellularLocation>
        <location evidence="2">Cytoplasm</location>
    </subcellularLocation>
</comment>
<comment type="similarity">
    <text evidence="2">Belongs to the TRAFAC class translation factor GTPase superfamily. Classic translation factor GTPase family. EF-Tu/EF-1A subfamily.</text>
</comment>
<organism>
    <name type="scientific">Chlorobium chlorochromatii (strain CaD3)</name>
    <dbReference type="NCBI Taxonomy" id="340177"/>
    <lineage>
        <taxon>Bacteria</taxon>
        <taxon>Pseudomonadati</taxon>
        <taxon>Chlorobiota</taxon>
        <taxon>Chlorobiia</taxon>
        <taxon>Chlorobiales</taxon>
        <taxon>Chlorobiaceae</taxon>
        <taxon>Chlorobium/Pelodictyon group</taxon>
        <taxon>Chlorobium</taxon>
    </lineage>
</organism>
<name>EFTU_CHLCH</name>
<keyword id="KW-0963">Cytoplasm</keyword>
<keyword id="KW-0251">Elongation factor</keyword>
<keyword id="KW-0342">GTP-binding</keyword>
<keyword id="KW-0378">Hydrolase</keyword>
<keyword id="KW-0460">Magnesium</keyword>
<keyword id="KW-0479">Metal-binding</keyword>
<keyword id="KW-0547">Nucleotide-binding</keyword>
<keyword id="KW-0648">Protein biosynthesis</keyword>
<evidence type="ECO:0000250" key="1"/>
<evidence type="ECO:0000255" key="2">
    <source>
        <dbReference type="HAMAP-Rule" id="MF_00118"/>
    </source>
</evidence>
<reference key="1">
    <citation type="submission" date="2005-08" db="EMBL/GenBank/DDBJ databases">
        <title>Complete sequence of Chlorobium chlorochromatii CaD3.</title>
        <authorList>
            <consortium name="US DOE Joint Genome Institute"/>
            <person name="Copeland A."/>
            <person name="Lucas S."/>
            <person name="Lapidus A."/>
            <person name="Barry K."/>
            <person name="Detter J.C."/>
            <person name="Glavina T."/>
            <person name="Hammon N."/>
            <person name="Israni S."/>
            <person name="Pitluck S."/>
            <person name="Bryant D."/>
            <person name="Schmutz J."/>
            <person name="Larimer F."/>
            <person name="Land M."/>
            <person name="Kyrpides N."/>
            <person name="Ivanova N."/>
            <person name="Richardson P."/>
        </authorList>
    </citation>
    <scope>NUCLEOTIDE SEQUENCE [LARGE SCALE GENOMIC DNA]</scope>
    <source>
        <strain>CaD3</strain>
    </source>
</reference>
<sequence>MAKESYKRDKPHVNIGTIGHVDHGKTTLTAAITLVLSKQGLAQERDFGSIDKAPEERERGITISTAHVEYQTDKRHYAHIDCPGHADYIKNMITGAAQMDGAILVVAATDGPMPQTREHILLARQVNVPSLVVFLNKVDIADPELIELVELELRELLSQYDFPGDDIPIIKGSALKAMEGDAEGEKAILELMDAVDAFIPDPVRDVDKPFLMPVEDVFSISGRGTVGTGRIERGRIKLNEEVEIVGLRPTRKSVVTGIEMFQKLLDEGQAGDNAGLLLRGVDKTELERGMVIAKPGTIKPHTKFKAEVYILKKEEGGRHTPFFNGYRPQFYFRTTDVTGSVTLPEGVEMVMPGDNLAIEVELLAPIAMDEGLRFAIREGGRTVGAGSVTKINE</sequence>
<feature type="chain" id="PRO_1000015634" description="Elongation factor Tu">
    <location>
        <begin position="1"/>
        <end position="393"/>
    </location>
</feature>
<feature type="domain" description="tr-type G">
    <location>
        <begin position="10"/>
        <end position="203"/>
    </location>
</feature>
<feature type="region of interest" description="G1" evidence="1">
    <location>
        <begin position="19"/>
        <end position="26"/>
    </location>
</feature>
<feature type="region of interest" description="G2" evidence="1">
    <location>
        <begin position="60"/>
        <end position="64"/>
    </location>
</feature>
<feature type="region of interest" description="G3" evidence="1">
    <location>
        <begin position="81"/>
        <end position="84"/>
    </location>
</feature>
<feature type="region of interest" description="G4" evidence="1">
    <location>
        <begin position="136"/>
        <end position="139"/>
    </location>
</feature>
<feature type="region of interest" description="G5" evidence="1">
    <location>
        <begin position="173"/>
        <end position="175"/>
    </location>
</feature>
<feature type="binding site" evidence="2">
    <location>
        <begin position="19"/>
        <end position="26"/>
    </location>
    <ligand>
        <name>GTP</name>
        <dbReference type="ChEBI" id="CHEBI:37565"/>
    </ligand>
</feature>
<feature type="binding site" evidence="2">
    <location>
        <position position="26"/>
    </location>
    <ligand>
        <name>Mg(2+)</name>
        <dbReference type="ChEBI" id="CHEBI:18420"/>
    </ligand>
</feature>
<feature type="binding site" evidence="2">
    <location>
        <begin position="81"/>
        <end position="85"/>
    </location>
    <ligand>
        <name>GTP</name>
        <dbReference type="ChEBI" id="CHEBI:37565"/>
    </ligand>
</feature>
<feature type="binding site" evidence="2">
    <location>
        <begin position="136"/>
        <end position="139"/>
    </location>
    <ligand>
        <name>GTP</name>
        <dbReference type="ChEBI" id="CHEBI:37565"/>
    </ligand>
</feature>